<name>FABH_MYCTA</name>
<sequence>MTEIATTSGARSVGLLSVGAYRPERVVTNDEICQHIDSSDEWIYTRTGIKTRRFAADDESAASMATEACRRALSNAGLSAADIDGVIVTTNTHFLQTPPAAPMVAASLGAKGILGFDLSAGCAGFGYALGAAADMIRGGGAATMLVVGTEKLSPTIDMYDRGNCFIFADGAAAVVVGETPFQGIGPTVAGSDGEQADAIRQDIDWITFAQNPSGPRPFVRLEGPAVFRWAAFKMGDVGRRAMDAAGVRPDQIDVFVPHQANSRINELLVKNLQLRPDAVVANDIEHTGNTSAASIPLAMAELLTTGAAKPGDLALLIGYGAGLSYAAQVVRMPKG</sequence>
<organism>
    <name type="scientific">Mycobacterium tuberculosis (strain ATCC 25177 / H37Ra)</name>
    <dbReference type="NCBI Taxonomy" id="419947"/>
    <lineage>
        <taxon>Bacteria</taxon>
        <taxon>Bacillati</taxon>
        <taxon>Actinomycetota</taxon>
        <taxon>Actinomycetes</taxon>
        <taxon>Mycobacteriales</taxon>
        <taxon>Mycobacteriaceae</taxon>
        <taxon>Mycobacterium</taxon>
        <taxon>Mycobacterium tuberculosis complex</taxon>
    </lineage>
</organism>
<protein>
    <recommendedName>
        <fullName evidence="1">Mycobacterial beta-ketoacyl-[acyl-carrier-protein] synthase III</fullName>
        <shortName evidence="1">Beta-ketoacyl-ACP synthase III</shortName>
        <shortName evidence="1">KAS III</shortName>
        <ecNumber evidence="1">2.3.1.301</ecNumber>
    </recommendedName>
    <alternativeName>
        <fullName evidence="1">3-oxoacyl-[acyl-carrier-protein] synthase 3</fullName>
    </alternativeName>
    <alternativeName>
        <fullName evidence="1">3-oxoacyl-[acyl-carrier-protein] synthase III</fullName>
    </alternativeName>
</protein>
<evidence type="ECO:0000255" key="1">
    <source>
        <dbReference type="HAMAP-Rule" id="MF_01815"/>
    </source>
</evidence>
<gene>
    <name evidence="1" type="primary">fabH</name>
    <name type="ordered locus">MRA_0540</name>
</gene>
<proteinExistence type="inferred from homology"/>
<comment type="function">
    <text evidence="1">Catalyzes the condensation reaction of fatty acid synthesis by the addition to an acyl acceptor of two carbons from malonyl-ACP. Catalyzes the first condensation reaction which initiates fatty acid synthesis and may therefore play a role in governing the total rate of fatty acid production. Possesses both acetoacetyl-ACP synthase and acetyl transacylase activities. Its substrate specificity determines the biosynthesis of branched-chain and/or straight-chain of fatty acids.</text>
</comment>
<comment type="catalytic activity">
    <reaction evidence="1">
        <text>malonyl-[ACP] + dodecanoyl-CoA + H(+) = 3-oxotetradecanoyl-[ACP] + CO2 + CoA</text>
        <dbReference type="Rhea" id="RHEA:43640"/>
        <dbReference type="Rhea" id="RHEA-COMP:9623"/>
        <dbReference type="Rhea" id="RHEA-COMP:9645"/>
        <dbReference type="ChEBI" id="CHEBI:15378"/>
        <dbReference type="ChEBI" id="CHEBI:16526"/>
        <dbReference type="ChEBI" id="CHEBI:57287"/>
        <dbReference type="ChEBI" id="CHEBI:57375"/>
        <dbReference type="ChEBI" id="CHEBI:78449"/>
        <dbReference type="ChEBI" id="CHEBI:78473"/>
        <dbReference type="EC" id="2.3.1.301"/>
    </reaction>
    <physiologicalReaction direction="left-to-right" evidence="1">
        <dbReference type="Rhea" id="RHEA:43641"/>
    </physiologicalReaction>
</comment>
<comment type="pathway">
    <text evidence="1">Lipid metabolism; fatty acid biosynthesis.</text>
</comment>
<comment type="pathway">
    <text evidence="1">Lipid metabolism; mycolic acid biosynthesis.</text>
</comment>
<comment type="subunit">
    <text evidence="1">Homodimer.</text>
</comment>
<comment type="subcellular location">
    <subcellularLocation>
        <location evidence="1">Cytoplasm</location>
    </subcellularLocation>
</comment>
<comment type="domain">
    <text evidence="1">The last Arg residue of the ACP-binding site is essential for the weak association between ACP/AcpP and FabH.</text>
</comment>
<comment type="similarity">
    <text evidence="1">Belongs to the thiolase-like superfamily. FabH family.</text>
</comment>
<keyword id="KW-0012">Acyltransferase</keyword>
<keyword id="KW-0963">Cytoplasm</keyword>
<keyword id="KW-0275">Fatty acid biosynthesis</keyword>
<keyword id="KW-0276">Fatty acid metabolism</keyword>
<keyword id="KW-0444">Lipid biosynthesis</keyword>
<keyword id="KW-0443">Lipid metabolism</keyword>
<keyword id="KW-0511">Multifunctional enzyme</keyword>
<keyword id="KW-1185">Reference proteome</keyword>
<keyword id="KW-0808">Transferase</keyword>
<accession>A5TZR3</accession>
<feature type="chain" id="PRO_1000056379" description="Mycobacterial beta-ketoacyl-[acyl-carrier-protein] synthase III">
    <location>
        <begin position="1"/>
        <end position="335"/>
    </location>
</feature>
<feature type="region of interest" description="ACP-binding" evidence="1">
    <location>
        <begin position="259"/>
        <end position="263"/>
    </location>
</feature>
<feature type="active site" evidence="1">
    <location>
        <position position="122"/>
    </location>
</feature>
<feature type="active site" evidence="1">
    <location>
        <position position="258"/>
    </location>
</feature>
<feature type="active site" evidence="1">
    <location>
        <position position="289"/>
    </location>
</feature>
<dbReference type="EC" id="2.3.1.301" evidence="1"/>
<dbReference type="EMBL" id="CP000611">
    <property type="protein sequence ID" value="ABQ72263.1"/>
    <property type="molecule type" value="Genomic_DNA"/>
</dbReference>
<dbReference type="RefSeq" id="WP_003402861.1">
    <property type="nucleotide sequence ID" value="NZ_CP016972.1"/>
</dbReference>
<dbReference type="SMR" id="A5TZR3"/>
<dbReference type="GeneID" id="45424497"/>
<dbReference type="KEGG" id="mra:MRA_0540"/>
<dbReference type="eggNOG" id="COG0332">
    <property type="taxonomic scope" value="Bacteria"/>
</dbReference>
<dbReference type="HOGENOM" id="CLU_039592_4_0_11"/>
<dbReference type="UniPathway" id="UPA00094"/>
<dbReference type="UniPathway" id="UPA00915"/>
<dbReference type="Proteomes" id="UP000001988">
    <property type="component" value="Chromosome"/>
</dbReference>
<dbReference type="GO" id="GO:0005737">
    <property type="term" value="C:cytoplasm"/>
    <property type="evidence" value="ECO:0007669"/>
    <property type="project" value="UniProtKB-SubCell"/>
</dbReference>
<dbReference type="GO" id="GO:0004315">
    <property type="term" value="F:3-oxoacyl-[acyl-carrier-protein] synthase activity"/>
    <property type="evidence" value="ECO:0007669"/>
    <property type="project" value="InterPro"/>
</dbReference>
<dbReference type="GO" id="GO:0033818">
    <property type="term" value="F:beta-ketoacyl-acyl-carrier-protein synthase III activity"/>
    <property type="evidence" value="ECO:0007669"/>
    <property type="project" value="UniProtKB-UniRule"/>
</dbReference>
<dbReference type="GO" id="GO:0006633">
    <property type="term" value="P:fatty acid biosynthetic process"/>
    <property type="evidence" value="ECO:0007669"/>
    <property type="project" value="UniProtKB-UniRule"/>
</dbReference>
<dbReference type="CDD" id="cd00830">
    <property type="entry name" value="KAS_III"/>
    <property type="match status" value="1"/>
</dbReference>
<dbReference type="FunFam" id="3.40.47.10:FF:000071">
    <property type="entry name" value="3-oxoacyl-[acyl-carrier-protein] synthase 3"/>
    <property type="match status" value="1"/>
</dbReference>
<dbReference type="FunFam" id="3.40.47.10:FF:000076">
    <property type="entry name" value="3-oxoacyl-[acyl-carrier-protein] synthase 3"/>
    <property type="match status" value="1"/>
</dbReference>
<dbReference type="Gene3D" id="3.40.47.10">
    <property type="match status" value="2"/>
</dbReference>
<dbReference type="HAMAP" id="MF_01815">
    <property type="entry name" value="FabH"/>
    <property type="match status" value="1"/>
</dbReference>
<dbReference type="InterPro" id="IPR013747">
    <property type="entry name" value="ACP_syn_III_C"/>
</dbReference>
<dbReference type="InterPro" id="IPR013751">
    <property type="entry name" value="ACP_syn_III_N"/>
</dbReference>
<dbReference type="InterPro" id="IPR004655">
    <property type="entry name" value="FabH"/>
</dbReference>
<dbReference type="InterPro" id="IPR016039">
    <property type="entry name" value="Thiolase-like"/>
</dbReference>
<dbReference type="NCBIfam" id="TIGR00747">
    <property type="entry name" value="fabH"/>
    <property type="match status" value="1"/>
</dbReference>
<dbReference type="NCBIfam" id="NF006829">
    <property type="entry name" value="PRK09352.1"/>
    <property type="match status" value="1"/>
</dbReference>
<dbReference type="PANTHER" id="PTHR43091">
    <property type="entry name" value="3-OXOACYL-[ACYL-CARRIER-PROTEIN] SYNTHASE"/>
    <property type="match status" value="1"/>
</dbReference>
<dbReference type="PANTHER" id="PTHR43091:SF1">
    <property type="entry name" value="BETA-KETOACYL-[ACYL-CARRIER-PROTEIN] SYNTHASE III, CHLOROPLASTIC"/>
    <property type="match status" value="1"/>
</dbReference>
<dbReference type="Pfam" id="PF08545">
    <property type="entry name" value="ACP_syn_III"/>
    <property type="match status" value="1"/>
</dbReference>
<dbReference type="Pfam" id="PF08541">
    <property type="entry name" value="ACP_syn_III_C"/>
    <property type="match status" value="1"/>
</dbReference>
<dbReference type="SUPFAM" id="SSF53901">
    <property type="entry name" value="Thiolase-like"/>
    <property type="match status" value="1"/>
</dbReference>
<reference key="1">
    <citation type="journal article" date="2008" name="PLoS ONE">
        <title>Genetic basis of virulence attenuation revealed by comparative genomic analysis of Mycobacterium tuberculosis strain H37Ra versus H37Rv.</title>
        <authorList>
            <person name="Zheng H."/>
            <person name="Lu L."/>
            <person name="Wang B."/>
            <person name="Pu S."/>
            <person name="Zhang X."/>
            <person name="Zhu G."/>
            <person name="Shi W."/>
            <person name="Zhang L."/>
            <person name="Wang H."/>
            <person name="Wang S."/>
            <person name="Zhao G."/>
            <person name="Zhang Y."/>
        </authorList>
    </citation>
    <scope>NUCLEOTIDE SEQUENCE [LARGE SCALE GENOMIC DNA]</scope>
    <source>
        <strain>ATCC 25177 / H37Ra</strain>
    </source>
</reference>